<protein>
    <recommendedName>
        <fullName evidence="1">Nucleotide-binding protein VF_0384</fullName>
    </recommendedName>
</protein>
<organism>
    <name type="scientific">Aliivibrio fischeri (strain ATCC 700601 / ES114)</name>
    <name type="common">Vibrio fischeri</name>
    <dbReference type="NCBI Taxonomy" id="312309"/>
    <lineage>
        <taxon>Bacteria</taxon>
        <taxon>Pseudomonadati</taxon>
        <taxon>Pseudomonadota</taxon>
        <taxon>Gammaproteobacteria</taxon>
        <taxon>Vibrionales</taxon>
        <taxon>Vibrionaceae</taxon>
        <taxon>Aliivibrio</taxon>
    </lineage>
</organism>
<comment type="function">
    <text evidence="1">Displays ATPase and GTPase activities.</text>
</comment>
<comment type="similarity">
    <text evidence="1">Belongs to the RapZ-like family.</text>
</comment>
<name>Y384_ALIF1</name>
<gene>
    <name type="ordered locus">VF_0384</name>
</gene>
<evidence type="ECO:0000255" key="1">
    <source>
        <dbReference type="HAMAP-Rule" id="MF_00636"/>
    </source>
</evidence>
<accession>Q5E7W7</accession>
<feature type="chain" id="PRO_0000107784" description="Nucleotide-binding protein VF_0384">
    <location>
        <begin position="1"/>
        <end position="284"/>
    </location>
</feature>
<feature type="binding site" evidence="1">
    <location>
        <begin position="8"/>
        <end position="15"/>
    </location>
    <ligand>
        <name>ATP</name>
        <dbReference type="ChEBI" id="CHEBI:30616"/>
    </ligand>
</feature>
<feature type="binding site" evidence="1">
    <location>
        <begin position="56"/>
        <end position="59"/>
    </location>
    <ligand>
        <name>GTP</name>
        <dbReference type="ChEBI" id="CHEBI:37565"/>
    </ligand>
</feature>
<sequence>MKLMVVSGSSGAGKSVALRVLEDLGYYCVDNLPIDLLTQFVESIQHSSQNVAVSVDIRNLPKDPALLKNTLALLKKTHDVTVIFLDAEDKELIKRYSETRRLHPLSLIGEQCSLEQAVTLEKSILSDYREEADLVLDTTTKSIHDLSETLRSRILGRESKELVMVFESFGFKHGLPTDADYVFDVRFLPNPHWEPSLRPMTGLDKPVADYLAKHTEVIQLKEQIQQFLTTWLPALEKNNRSYLTVAIGCTGGQHRSVYITQQLGEYFKQQGKQVQIRHKTLERH</sequence>
<reference key="1">
    <citation type="journal article" date="2005" name="Proc. Natl. Acad. Sci. U.S.A.">
        <title>Complete genome sequence of Vibrio fischeri: a symbiotic bacterium with pathogenic congeners.</title>
        <authorList>
            <person name="Ruby E.G."/>
            <person name="Urbanowski M."/>
            <person name="Campbell J."/>
            <person name="Dunn A."/>
            <person name="Faini M."/>
            <person name="Gunsalus R."/>
            <person name="Lostroh P."/>
            <person name="Lupp C."/>
            <person name="McCann J."/>
            <person name="Millikan D."/>
            <person name="Schaefer A."/>
            <person name="Stabb E."/>
            <person name="Stevens A."/>
            <person name="Visick K."/>
            <person name="Whistler C."/>
            <person name="Greenberg E.P."/>
        </authorList>
    </citation>
    <scope>NUCLEOTIDE SEQUENCE [LARGE SCALE GENOMIC DNA]</scope>
    <source>
        <strain>ATCC 700601 / ES114</strain>
    </source>
</reference>
<keyword id="KW-0067">ATP-binding</keyword>
<keyword id="KW-0342">GTP-binding</keyword>
<keyword id="KW-0547">Nucleotide-binding</keyword>
<keyword id="KW-1185">Reference proteome</keyword>
<dbReference type="EMBL" id="CP000020">
    <property type="protein sequence ID" value="AAW84879.1"/>
    <property type="molecule type" value="Genomic_DNA"/>
</dbReference>
<dbReference type="RefSeq" id="YP_203767.1">
    <property type="nucleotide sequence ID" value="NC_006840.2"/>
</dbReference>
<dbReference type="SMR" id="Q5E7W7"/>
<dbReference type="STRING" id="312309.VF_0384"/>
<dbReference type="EnsemblBacteria" id="AAW84879">
    <property type="protein sequence ID" value="AAW84879"/>
    <property type="gene ID" value="VF_0384"/>
</dbReference>
<dbReference type="GeneID" id="54163012"/>
<dbReference type="KEGG" id="vfi:VF_0384"/>
<dbReference type="PATRIC" id="fig|312309.11.peg.375"/>
<dbReference type="eggNOG" id="COG1660">
    <property type="taxonomic scope" value="Bacteria"/>
</dbReference>
<dbReference type="HOGENOM" id="CLU_059558_0_0_6"/>
<dbReference type="OrthoDB" id="9784461at2"/>
<dbReference type="Proteomes" id="UP000000537">
    <property type="component" value="Chromosome I"/>
</dbReference>
<dbReference type="GO" id="GO:0005524">
    <property type="term" value="F:ATP binding"/>
    <property type="evidence" value="ECO:0007669"/>
    <property type="project" value="UniProtKB-UniRule"/>
</dbReference>
<dbReference type="GO" id="GO:0005525">
    <property type="term" value="F:GTP binding"/>
    <property type="evidence" value="ECO:0007669"/>
    <property type="project" value="UniProtKB-UniRule"/>
</dbReference>
<dbReference type="Gene3D" id="3.40.50.300">
    <property type="entry name" value="P-loop containing nucleotide triphosphate hydrolases"/>
    <property type="match status" value="1"/>
</dbReference>
<dbReference type="HAMAP" id="MF_00636">
    <property type="entry name" value="RapZ_like"/>
    <property type="match status" value="1"/>
</dbReference>
<dbReference type="InterPro" id="IPR027417">
    <property type="entry name" value="P-loop_NTPase"/>
</dbReference>
<dbReference type="InterPro" id="IPR005337">
    <property type="entry name" value="RapZ-like"/>
</dbReference>
<dbReference type="InterPro" id="IPR053930">
    <property type="entry name" value="RapZ-like_N"/>
</dbReference>
<dbReference type="InterPro" id="IPR053931">
    <property type="entry name" value="RapZ_C"/>
</dbReference>
<dbReference type="NCBIfam" id="NF003828">
    <property type="entry name" value="PRK05416.1"/>
    <property type="match status" value="1"/>
</dbReference>
<dbReference type="PANTHER" id="PTHR30448">
    <property type="entry name" value="RNASE ADAPTER PROTEIN RAPZ"/>
    <property type="match status" value="1"/>
</dbReference>
<dbReference type="PANTHER" id="PTHR30448:SF0">
    <property type="entry name" value="RNASE ADAPTER PROTEIN RAPZ"/>
    <property type="match status" value="1"/>
</dbReference>
<dbReference type="Pfam" id="PF22740">
    <property type="entry name" value="PapZ_C"/>
    <property type="match status" value="1"/>
</dbReference>
<dbReference type="Pfam" id="PF03668">
    <property type="entry name" value="RapZ-like_N"/>
    <property type="match status" value="1"/>
</dbReference>
<dbReference type="PIRSF" id="PIRSF005052">
    <property type="entry name" value="P-loopkin"/>
    <property type="match status" value="1"/>
</dbReference>
<dbReference type="SUPFAM" id="SSF52540">
    <property type="entry name" value="P-loop containing nucleoside triphosphate hydrolases"/>
    <property type="match status" value="1"/>
</dbReference>
<proteinExistence type="inferred from homology"/>